<sequence length="644" mass="73646">MASDYYSSDDEGFGEKVGLIGEKDRFEAETIHVIEVSQHEADIQKAKQRSLATHEAEKLDLATHEAEQLDLAIQEFSRQEEEEERRRTRELENDAQIANVLQHEERERLINKKTALEDEEDELLARTLEESLKENNRRKMFEEQVNKDEQLALIVQESLNMEEYPIRLEEYKSISRRAPLDVDEQFAKAVKESLKNKGKGKQFEDEQVKKDEQLALIVQESLNMVESPPRLEENNNISTRAPVDEDEQLAKAVEESLKGKGQIKQSKDEVEGDGMLLELNPPPSLCGGCNFAVEHGGSVNILGVLWHPGCFCCRACHKPIAIHDIENHVSNSRGKFHKSCYERYCYVCKEKKMKTYNNHPFWEERYCPVHEADGTPKCCSCERLEPRESNYVMLADGRWLCLECMNSAVMDSDECQPLHFDMRDFFEGLNMKIEKEFPFLLVEKQALNKAEKEEKIDYQYEVVTRGICLSEEQIVDSVSQRPVRGPNNKLVGMATESQKVTRECEVTAILILYGLPRLLTGYILAHEMMHAYLRLNGHRNLNNILEEGICQVLGHLWLDSQTYATADATADASSSASSSSRTPPAASASKKGEWSDFDKKLVEFCKNQIETDDSPVYGLGFRTVNEMVTNSSLQETLKEILRQR</sequence>
<comment type="function">
    <text evidence="1">Ubiquitin receptor that probably regulates developmental process.</text>
</comment>
<comment type="subunit">
    <text evidence="1">Interacts with ubiquitin.</text>
</comment>
<comment type="domain">
    <text evidence="1">The UIM domains bind molecules modified by monoubiquitin or ubiquitin chains and promote coupled monoubiquitination.</text>
</comment>
<organism>
    <name type="scientific">Arabidopsis thaliana</name>
    <name type="common">Mouse-ear cress</name>
    <dbReference type="NCBI Taxonomy" id="3702"/>
    <lineage>
        <taxon>Eukaryota</taxon>
        <taxon>Viridiplantae</taxon>
        <taxon>Streptophyta</taxon>
        <taxon>Embryophyta</taxon>
        <taxon>Tracheophyta</taxon>
        <taxon>Spermatophyta</taxon>
        <taxon>Magnoliopsida</taxon>
        <taxon>eudicotyledons</taxon>
        <taxon>Gunneridae</taxon>
        <taxon>Pentapetalae</taxon>
        <taxon>rosids</taxon>
        <taxon>malvids</taxon>
        <taxon>Brassicales</taxon>
        <taxon>Brassicaceae</taxon>
        <taxon>Camelineae</taxon>
        <taxon>Arabidopsis</taxon>
    </lineage>
</organism>
<evidence type="ECO:0000250" key="1"/>
<evidence type="ECO:0000255" key="2">
    <source>
        <dbReference type="PROSITE-ProRule" id="PRU00125"/>
    </source>
</evidence>
<evidence type="ECO:0000255" key="3">
    <source>
        <dbReference type="PROSITE-ProRule" id="PRU00213"/>
    </source>
</evidence>
<evidence type="ECO:0000256" key="4">
    <source>
        <dbReference type="SAM" id="MobiDB-lite"/>
    </source>
</evidence>
<gene>
    <name type="primary">DAR6</name>
    <name type="ordered locus">At5g66620</name>
    <name type="ORF">K1F13.30</name>
</gene>
<feature type="chain" id="PRO_0000396941" description="Protein DA1-related 6">
    <location>
        <begin position="1"/>
        <end position="644"/>
    </location>
</feature>
<feature type="domain" description="UIM 1" evidence="3">
    <location>
        <begin position="119"/>
        <end position="138"/>
    </location>
</feature>
<feature type="domain" description="UIM 2" evidence="3">
    <location>
        <begin position="181"/>
        <end position="200"/>
    </location>
</feature>
<feature type="domain" description="UIM 3" evidence="3">
    <location>
        <begin position="244"/>
        <end position="263"/>
    </location>
</feature>
<feature type="domain" description="LIM zinc-binding" evidence="2">
    <location>
        <begin position="284"/>
        <end position="355"/>
    </location>
</feature>
<feature type="region of interest" description="Disordered" evidence="4">
    <location>
        <begin position="572"/>
        <end position="591"/>
    </location>
</feature>
<feature type="compositionally biased region" description="Low complexity" evidence="4">
    <location>
        <begin position="572"/>
        <end position="589"/>
    </location>
</feature>
<protein>
    <recommendedName>
        <fullName>Protein DA1-related 6</fullName>
    </recommendedName>
</protein>
<keyword id="KW-0440">LIM domain</keyword>
<keyword id="KW-0479">Metal-binding</keyword>
<keyword id="KW-1185">Reference proteome</keyword>
<keyword id="KW-0677">Repeat</keyword>
<keyword id="KW-0862">Zinc</keyword>
<accession>Q9FJX8</accession>
<dbReference type="EMBL" id="AB013389">
    <property type="protein sequence ID" value="BAB10938.1"/>
    <property type="molecule type" value="Genomic_DNA"/>
</dbReference>
<dbReference type="EMBL" id="CP002688">
    <property type="protein sequence ID" value="AED98240.1"/>
    <property type="molecule type" value="Genomic_DNA"/>
</dbReference>
<dbReference type="RefSeq" id="NP_201463.1">
    <property type="nucleotide sequence ID" value="NM_126060.1"/>
</dbReference>
<dbReference type="BioGRID" id="22036">
    <property type="interactions" value="1"/>
</dbReference>
<dbReference type="STRING" id="3702.Q9FJX8"/>
<dbReference type="iPTMnet" id="Q9FJX8"/>
<dbReference type="PaxDb" id="3702-AT5G66620.1"/>
<dbReference type="ProteomicsDB" id="224679"/>
<dbReference type="EnsemblPlants" id="AT5G66620.1">
    <property type="protein sequence ID" value="AT5G66620.1"/>
    <property type="gene ID" value="AT5G66620"/>
</dbReference>
<dbReference type="GeneID" id="836794"/>
<dbReference type="Gramene" id="AT5G66620.1">
    <property type="protein sequence ID" value="AT5G66620.1"/>
    <property type="gene ID" value="AT5G66620"/>
</dbReference>
<dbReference type="KEGG" id="ath:AT5G66620"/>
<dbReference type="Araport" id="AT5G66620"/>
<dbReference type="TAIR" id="AT5G66620">
    <property type="gene designation" value="DAR6"/>
</dbReference>
<dbReference type="eggNOG" id="KOG1703">
    <property type="taxonomic scope" value="Eukaryota"/>
</dbReference>
<dbReference type="HOGENOM" id="CLU_015906_3_0_1"/>
<dbReference type="InParanoid" id="Q9FJX8"/>
<dbReference type="PhylomeDB" id="Q9FJX8"/>
<dbReference type="PRO" id="PR:Q9FJX8"/>
<dbReference type="Proteomes" id="UP000006548">
    <property type="component" value="Chromosome 5"/>
</dbReference>
<dbReference type="ExpressionAtlas" id="Q9FJX8">
    <property type="expression patterns" value="baseline and differential"/>
</dbReference>
<dbReference type="GO" id="GO:0046872">
    <property type="term" value="F:metal ion binding"/>
    <property type="evidence" value="ECO:0007669"/>
    <property type="project" value="UniProtKB-KW"/>
</dbReference>
<dbReference type="GO" id="GO:0043130">
    <property type="term" value="F:ubiquitin binding"/>
    <property type="evidence" value="ECO:0000250"/>
    <property type="project" value="UniProtKB"/>
</dbReference>
<dbReference type="CDD" id="cd09396">
    <property type="entry name" value="LIM_DA1"/>
    <property type="match status" value="1"/>
</dbReference>
<dbReference type="FunFam" id="2.10.110.10:FF:000184">
    <property type="entry name" value="DA1-related protein 7"/>
    <property type="match status" value="1"/>
</dbReference>
<dbReference type="Gene3D" id="2.10.110.10">
    <property type="entry name" value="Cysteine Rich Protein"/>
    <property type="match status" value="1"/>
</dbReference>
<dbReference type="InterPro" id="IPR045218">
    <property type="entry name" value="DA1-like"/>
</dbReference>
<dbReference type="InterPro" id="IPR022087">
    <property type="entry name" value="DA1-like_dom"/>
</dbReference>
<dbReference type="InterPro" id="IPR003903">
    <property type="entry name" value="UIM_dom"/>
</dbReference>
<dbReference type="InterPro" id="IPR001781">
    <property type="entry name" value="Znf_LIM"/>
</dbReference>
<dbReference type="PANTHER" id="PTHR24209">
    <property type="entry name" value="PROTEIN DA1-RELATED 2"/>
    <property type="match status" value="1"/>
</dbReference>
<dbReference type="PANTHER" id="PTHR24209:SF28">
    <property type="entry name" value="PROTEIN DA1-RELATED 4-RELATED"/>
    <property type="match status" value="1"/>
</dbReference>
<dbReference type="Pfam" id="PF12315">
    <property type="entry name" value="DA1-like"/>
    <property type="match status" value="1"/>
</dbReference>
<dbReference type="Pfam" id="PF00412">
    <property type="entry name" value="LIM"/>
    <property type="match status" value="1"/>
</dbReference>
<dbReference type="Pfam" id="PF02809">
    <property type="entry name" value="UIM"/>
    <property type="match status" value="2"/>
</dbReference>
<dbReference type="SMART" id="SM00132">
    <property type="entry name" value="LIM"/>
    <property type="match status" value="1"/>
</dbReference>
<dbReference type="SMART" id="SM00726">
    <property type="entry name" value="UIM"/>
    <property type="match status" value="7"/>
</dbReference>
<dbReference type="PROSITE" id="PS00478">
    <property type="entry name" value="LIM_DOMAIN_1"/>
    <property type="match status" value="1"/>
</dbReference>
<dbReference type="PROSITE" id="PS50023">
    <property type="entry name" value="LIM_DOMAIN_2"/>
    <property type="match status" value="1"/>
</dbReference>
<dbReference type="PROSITE" id="PS50330">
    <property type="entry name" value="UIM"/>
    <property type="match status" value="2"/>
</dbReference>
<dbReference type="PROSITE" id="PS00142">
    <property type="entry name" value="ZINC_PROTEASE"/>
    <property type="match status" value="1"/>
</dbReference>
<reference key="1">
    <citation type="journal article" date="1998" name="DNA Res.">
        <title>Structural analysis of Arabidopsis thaliana chromosome 5. VI. Sequence features of the regions of 1,367,185 bp covered by 19 physically assigned P1 and TAC clones.</title>
        <authorList>
            <person name="Kotani H."/>
            <person name="Nakamura Y."/>
            <person name="Sato S."/>
            <person name="Asamizu E."/>
            <person name="Kaneko T."/>
            <person name="Miyajima N."/>
            <person name="Tabata S."/>
        </authorList>
    </citation>
    <scope>NUCLEOTIDE SEQUENCE [LARGE SCALE GENOMIC DNA]</scope>
    <source>
        <strain>cv. Columbia</strain>
    </source>
</reference>
<reference key="2">
    <citation type="journal article" date="2017" name="Plant J.">
        <title>Araport11: a complete reannotation of the Arabidopsis thaliana reference genome.</title>
        <authorList>
            <person name="Cheng C.Y."/>
            <person name="Krishnakumar V."/>
            <person name="Chan A.P."/>
            <person name="Thibaud-Nissen F."/>
            <person name="Schobel S."/>
            <person name="Town C.D."/>
        </authorList>
    </citation>
    <scope>GENOME REANNOTATION</scope>
    <source>
        <strain>cv. Columbia</strain>
    </source>
</reference>
<reference key="3">
    <citation type="journal article" date="2008" name="Genes Dev.">
        <title>Control of final seed and organ size by the DA1 gene family in Arabidopsis thaliana.</title>
        <authorList>
            <person name="Li Y."/>
            <person name="Zheng L."/>
            <person name="Corke F."/>
            <person name="Smith C."/>
            <person name="Bevan M.W."/>
        </authorList>
    </citation>
    <scope>GENE FAMILY</scope>
    <scope>NOMENCLATURE</scope>
</reference>
<proteinExistence type="evidence at transcript level"/>
<name>DAR6_ARATH</name>